<evidence type="ECO:0000255" key="1">
    <source>
        <dbReference type="HAMAP-Rule" id="MF_00073"/>
    </source>
</evidence>
<protein>
    <recommendedName>
        <fullName evidence="1">Transcription antitermination protein NusB</fullName>
    </recommendedName>
    <alternativeName>
        <fullName evidence="1">Antitermination factor NusB</fullName>
    </alternativeName>
</protein>
<accession>A9MM45</accession>
<comment type="function">
    <text evidence="1">Involved in transcription antitermination. Required for transcription of ribosomal RNA (rRNA) genes. Binds specifically to the boxA antiterminator sequence of the ribosomal RNA (rrn) operons.</text>
</comment>
<comment type="similarity">
    <text evidence="1">Belongs to the NusB family.</text>
</comment>
<dbReference type="EMBL" id="CP000880">
    <property type="protein sequence ID" value="ABX22367.1"/>
    <property type="molecule type" value="Genomic_DNA"/>
</dbReference>
<dbReference type="BMRB" id="A9MM45"/>
<dbReference type="SMR" id="A9MM45"/>
<dbReference type="STRING" id="41514.SARI_02508"/>
<dbReference type="KEGG" id="ses:SARI_02508"/>
<dbReference type="HOGENOM" id="CLU_087843_4_1_6"/>
<dbReference type="Proteomes" id="UP000002084">
    <property type="component" value="Chromosome"/>
</dbReference>
<dbReference type="GO" id="GO:0005829">
    <property type="term" value="C:cytosol"/>
    <property type="evidence" value="ECO:0007669"/>
    <property type="project" value="TreeGrafter"/>
</dbReference>
<dbReference type="GO" id="GO:0003723">
    <property type="term" value="F:RNA binding"/>
    <property type="evidence" value="ECO:0007669"/>
    <property type="project" value="UniProtKB-UniRule"/>
</dbReference>
<dbReference type="GO" id="GO:0006353">
    <property type="term" value="P:DNA-templated transcription termination"/>
    <property type="evidence" value="ECO:0007669"/>
    <property type="project" value="UniProtKB-UniRule"/>
</dbReference>
<dbReference type="GO" id="GO:0031564">
    <property type="term" value="P:transcription antitermination"/>
    <property type="evidence" value="ECO:0007669"/>
    <property type="project" value="UniProtKB-KW"/>
</dbReference>
<dbReference type="CDD" id="cd00619">
    <property type="entry name" value="Terminator_NusB"/>
    <property type="match status" value="1"/>
</dbReference>
<dbReference type="FunFam" id="1.10.940.10:FF:000001">
    <property type="entry name" value="Transcription antitermination factor NusB"/>
    <property type="match status" value="1"/>
</dbReference>
<dbReference type="Gene3D" id="1.10.940.10">
    <property type="entry name" value="NusB-like"/>
    <property type="match status" value="1"/>
</dbReference>
<dbReference type="HAMAP" id="MF_00073">
    <property type="entry name" value="NusB"/>
    <property type="match status" value="1"/>
</dbReference>
<dbReference type="InterPro" id="IPR035926">
    <property type="entry name" value="NusB-like_sf"/>
</dbReference>
<dbReference type="InterPro" id="IPR011605">
    <property type="entry name" value="NusB_fam"/>
</dbReference>
<dbReference type="InterPro" id="IPR006027">
    <property type="entry name" value="NusB_RsmB_TIM44"/>
</dbReference>
<dbReference type="NCBIfam" id="TIGR01951">
    <property type="entry name" value="nusB"/>
    <property type="match status" value="1"/>
</dbReference>
<dbReference type="PANTHER" id="PTHR11078:SF3">
    <property type="entry name" value="ANTITERMINATION NUSB DOMAIN-CONTAINING PROTEIN"/>
    <property type="match status" value="1"/>
</dbReference>
<dbReference type="PANTHER" id="PTHR11078">
    <property type="entry name" value="N UTILIZATION SUBSTANCE PROTEIN B-RELATED"/>
    <property type="match status" value="1"/>
</dbReference>
<dbReference type="Pfam" id="PF01029">
    <property type="entry name" value="NusB"/>
    <property type="match status" value="1"/>
</dbReference>
<dbReference type="SUPFAM" id="SSF48013">
    <property type="entry name" value="NusB-like"/>
    <property type="match status" value="1"/>
</dbReference>
<feature type="chain" id="PRO_1000075200" description="Transcription antitermination protein NusB">
    <location>
        <begin position="1"/>
        <end position="139"/>
    </location>
</feature>
<name>NUSB_SALAR</name>
<proteinExistence type="inferred from homology"/>
<organism>
    <name type="scientific">Salmonella arizonae (strain ATCC BAA-731 / CDC346-86 / RSK2980)</name>
    <dbReference type="NCBI Taxonomy" id="41514"/>
    <lineage>
        <taxon>Bacteria</taxon>
        <taxon>Pseudomonadati</taxon>
        <taxon>Pseudomonadota</taxon>
        <taxon>Gammaproteobacteria</taxon>
        <taxon>Enterobacterales</taxon>
        <taxon>Enterobacteriaceae</taxon>
        <taxon>Salmonella</taxon>
    </lineage>
</organism>
<gene>
    <name evidence="1" type="primary">nusB</name>
    <name type="ordered locus">SARI_02508</name>
</gene>
<sequence>MKPAARRRARECAVQALYSWQLSQNDIADVEYQFLAEQDVKDVDVLYFRELLSGVATNSAYLDGLMKPYLSRLLEELGQVEKAVLRIALFELSKRSDVPYKVAINEAIELAKTFGAEDSHKFVNGVLDKAAPVIRPNKK</sequence>
<keyword id="KW-1185">Reference proteome</keyword>
<keyword id="KW-0694">RNA-binding</keyword>
<keyword id="KW-0804">Transcription</keyword>
<keyword id="KW-0889">Transcription antitermination</keyword>
<keyword id="KW-0805">Transcription regulation</keyword>
<reference key="1">
    <citation type="submission" date="2007-11" db="EMBL/GenBank/DDBJ databases">
        <authorList>
            <consortium name="The Salmonella enterica serovar Arizonae Genome Sequencing Project"/>
            <person name="McClelland M."/>
            <person name="Sanderson E.K."/>
            <person name="Porwollik S."/>
            <person name="Spieth J."/>
            <person name="Clifton W.S."/>
            <person name="Fulton R."/>
            <person name="Chunyan W."/>
            <person name="Wollam A."/>
            <person name="Shah N."/>
            <person name="Pepin K."/>
            <person name="Bhonagiri V."/>
            <person name="Nash W."/>
            <person name="Johnson M."/>
            <person name="Thiruvilangam P."/>
            <person name="Wilson R."/>
        </authorList>
    </citation>
    <scope>NUCLEOTIDE SEQUENCE [LARGE SCALE GENOMIC DNA]</scope>
    <source>
        <strain>ATCC BAA-731 / CDC346-86 / RSK2980</strain>
    </source>
</reference>